<name>LEUC_FLAJ1</name>
<dbReference type="EC" id="4.2.1.33" evidence="1"/>
<dbReference type="EMBL" id="CP000685">
    <property type="protein sequence ID" value="ABQ04339.1"/>
    <property type="molecule type" value="Genomic_DNA"/>
</dbReference>
<dbReference type="RefSeq" id="WP_012023387.1">
    <property type="nucleotide sequence ID" value="NC_009441.1"/>
</dbReference>
<dbReference type="SMR" id="A5FKC6"/>
<dbReference type="STRING" id="376686.Fjoh_1307"/>
<dbReference type="KEGG" id="fjo:Fjoh_1307"/>
<dbReference type="eggNOG" id="COG0065">
    <property type="taxonomic scope" value="Bacteria"/>
</dbReference>
<dbReference type="HOGENOM" id="CLU_006714_3_4_10"/>
<dbReference type="OrthoDB" id="9802769at2"/>
<dbReference type="UniPathway" id="UPA00048">
    <property type="reaction ID" value="UER00071"/>
</dbReference>
<dbReference type="Proteomes" id="UP000006694">
    <property type="component" value="Chromosome"/>
</dbReference>
<dbReference type="GO" id="GO:0003861">
    <property type="term" value="F:3-isopropylmalate dehydratase activity"/>
    <property type="evidence" value="ECO:0007669"/>
    <property type="project" value="UniProtKB-UniRule"/>
</dbReference>
<dbReference type="GO" id="GO:0051539">
    <property type="term" value="F:4 iron, 4 sulfur cluster binding"/>
    <property type="evidence" value="ECO:0007669"/>
    <property type="project" value="UniProtKB-KW"/>
</dbReference>
<dbReference type="GO" id="GO:0046872">
    <property type="term" value="F:metal ion binding"/>
    <property type="evidence" value="ECO:0007669"/>
    <property type="project" value="UniProtKB-KW"/>
</dbReference>
<dbReference type="GO" id="GO:0009098">
    <property type="term" value="P:L-leucine biosynthetic process"/>
    <property type="evidence" value="ECO:0007669"/>
    <property type="project" value="UniProtKB-UniRule"/>
</dbReference>
<dbReference type="CDD" id="cd01583">
    <property type="entry name" value="IPMI"/>
    <property type="match status" value="1"/>
</dbReference>
<dbReference type="Gene3D" id="3.30.499.10">
    <property type="entry name" value="Aconitase, domain 3"/>
    <property type="match status" value="2"/>
</dbReference>
<dbReference type="HAMAP" id="MF_01026">
    <property type="entry name" value="LeuC_type1"/>
    <property type="match status" value="1"/>
</dbReference>
<dbReference type="InterPro" id="IPR004430">
    <property type="entry name" value="3-IsopropMal_deHydase_lsu"/>
</dbReference>
<dbReference type="InterPro" id="IPR015931">
    <property type="entry name" value="Acnase/IPM_dHydase_lsu_aba_1/3"/>
</dbReference>
<dbReference type="InterPro" id="IPR001030">
    <property type="entry name" value="Acoase/IPM_deHydtase_lsu_aba"/>
</dbReference>
<dbReference type="InterPro" id="IPR018136">
    <property type="entry name" value="Aconitase_4Fe-4S_BS"/>
</dbReference>
<dbReference type="InterPro" id="IPR036008">
    <property type="entry name" value="Aconitase_4Fe-4S_dom"/>
</dbReference>
<dbReference type="InterPro" id="IPR050067">
    <property type="entry name" value="IPM_dehydratase_rel_enz"/>
</dbReference>
<dbReference type="InterPro" id="IPR033941">
    <property type="entry name" value="IPMI_cat"/>
</dbReference>
<dbReference type="NCBIfam" id="TIGR00170">
    <property type="entry name" value="leuC"/>
    <property type="match status" value="1"/>
</dbReference>
<dbReference type="NCBIfam" id="NF004016">
    <property type="entry name" value="PRK05478.1"/>
    <property type="match status" value="1"/>
</dbReference>
<dbReference type="NCBIfam" id="NF009116">
    <property type="entry name" value="PRK12466.1"/>
    <property type="match status" value="1"/>
</dbReference>
<dbReference type="PANTHER" id="PTHR43822:SF9">
    <property type="entry name" value="3-ISOPROPYLMALATE DEHYDRATASE"/>
    <property type="match status" value="1"/>
</dbReference>
<dbReference type="PANTHER" id="PTHR43822">
    <property type="entry name" value="HOMOACONITASE, MITOCHONDRIAL-RELATED"/>
    <property type="match status" value="1"/>
</dbReference>
<dbReference type="Pfam" id="PF00330">
    <property type="entry name" value="Aconitase"/>
    <property type="match status" value="1"/>
</dbReference>
<dbReference type="PRINTS" id="PR00415">
    <property type="entry name" value="ACONITASE"/>
</dbReference>
<dbReference type="SUPFAM" id="SSF53732">
    <property type="entry name" value="Aconitase iron-sulfur domain"/>
    <property type="match status" value="1"/>
</dbReference>
<dbReference type="PROSITE" id="PS01244">
    <property type="entry name" value="ACONITASE_2"/>
    <property type="match status" value="1"/>
</dbReference>
<feature type="chain" id="PRO_1000084213" description="3-isopropylmalate dehydratase large subunit">
    <location>
        <begin position="1"/>
        <end position="464"/>
    </location>
</feature>
<feature type="binding site" evidence="1">
    <location>
        <position position="345"/>
    </location>
    <ligand>
        <name>[4Fe-4S] cluster</name>
        <dbReference type="ChEBI" id="CHEBI:49883"/>
    </ligand>
</feature>
<feature type="binding site" evidence="1">
    <location>
        <position position="405"/>
    </location>
    <ligand>
        <name>[4Fe-4S] cluster</name>
        <dbReference type="ChEBI" id="CHEBI:49883"/>
    </ligand>
</feature>
<feature type="binding site" evidence="1">
    <location>
        <position position="408"/>
    </location>
    <ligand>
        <name>[4Fe-4S] cluster</name>
        <dbReference type="ChEBI" id="CHEBI:49883"/>
    </ligand>
</feature>
<comment type="function">
    <text evidence="1">Catalyzes the isomerization between 2-isopropylmalate and 3-isopropylmalate, via the formation of 2-isopropylmaleate.</text>
</comment>
<comment type="catalytic activity">
    <reaction evidence="1">
        <text>(2R,3S)-3-isopropylmalate = (2S)-2-isopropylmalate</text>
        <dbReference type="Rhea" id="RHEA:32287"/>
        <dbReference type="ChEBI" id="CHEBI:1178"/>
        <dbReference type="ChEBI" id="CHEBI:35121"/>
        <dbReference type="EC" id="4.2.1.33"/>
    </reaction>
</comment>
<comment type="cofactor">
    <cofactor evidence="1">
        <name>[4Fe-4S] cluster</name>
        <dbReference type="ChEBI" id="CHEBI:49883"/>
    </cofactor>
    <text evidence="1">Binds 1 [4Fe-4S] cluster per subunit.</text>
</comment>
<comment type="pathway">
    <text evidence="1">Amino-acid biosynthesis; L-leucine biosynthesis; L-leucine from 3-methyl-2-oxobutanoate: step 2/4.</text>
</comment>
<comment type="subunit">
    <text evidence="1">Heterodimer of LeuC and LeuD.</text>
</comment>
<comment type="similarity">
    <text evidence="1">Belongs to the aconitase/IPM isomerase family. LeuC type 1 subfamily.</text>
</comment>
<sequence>MSKTLFDKVWDSHVVRKIEDGPDVFFIDRHFIHEVTSPVAFLGLKSRGVNVLYPERTFATADHNTPTINQHLPVQDPLSANQLQALEDNANEYGISHWGLGHQKNGIVHVVGPENGITLPGATIVCGDSHTSTHGAFGAIAFGIGTSEVEMVLSTQCIMQPKPKKMRINVNGKLSKGVGPKDVALYIIAQLTTSGGTGYFVEYAGDVFENMTMEGRMTVCNLSIEMGARGGMIAPDQTTFDFLEGRLYAPKGEAWTKAVEYWKTLKTDADAVFDAELNIKAEDIEPMITYGTNPGMGIGITKHIPSAKEVEGGEETYKKSLAYMGFNEDDVMIGKQIDYVFLGSCTNGRIEDFRAFAEIVKGRKKAENVTAWLVPGSHVVEAQIKEEGILDILTEAGFVLRQPGCSACLAMNDDKVPAGKYAVSTSNRNFEGRQGPGSRTLLASPIMAAAAAVTGKLTDPRELF</sequence>
<protein>
    <recommendedName>
        <fullName evidence="1">3-isopropylmalate dehydratase large subunit</fullName>
        <ecNumber evidence="1">4.2.1.33</ecNumber>
    </recommendedName>
    <alternativeName>
        <fullName evidence="1">Alpha-IPM isomerase</fullName>
        <shortName evidence="1">IPMI</shortName>
    </alternativeName>
    <alternativeName>
        <fullName evidence="1">Isopropylmalate isomerase</fullName>
    </alternativeName>
</protein>
<reference key="1">
    <citation type="journal article" date="2009" name="Appl. Environ. Microbiol.">
        <title>Novel features of the polysaccharide-digesting gliding bacterium Flavobacterium johnsoniae as revealed by genome sequence analysis.</title>
        <authorList>
            <person name="McBride M.J."/>
            <person name="Xie G."/>
            <person name="Martens E.C."/>
            <person name="Lapidus A."/>
            <person name="Henrissat B."/>
            <person name="Rhodes R.G."/>
            <person name="Goltsman E."/>
            <person name="Wang W."/>
            <person name="Xu J."/>
            <person name="Hunnicutt D.W."/>
            <person name="Staroscik A.M."/>
            <person name="Hoover T.R."/>
            <person name="Cheng Y.Q."/>
            <person name="Stein J.L."/>
        </authorList>
    </citation>
    <scope>NUCLEOTIDE SEQUENCE [LARGE SCALE GENOMIC DNA]</scope>
    <source>
        <strain>ATCC 17061 / DSM 2064 / JCM 8514 / BCRC 14874 / CCUG 350202 / NBRC 14942 / NCIMB 11054 / UW101</strain>
    </source>
</reference>
<keyword id="KW-0004">4Fe-4S</keyword>
<keyword id="KW-0028">Amino-acid biosynthesis</keyword>
<keyword id="KW-0100">Branched-chain amino acid biosynthesis</keyword>
<keyword id="KW-0408">Iron</keyword>
<keyword id="KW-0411">Iron-sulfur</keyword>
<keyword id="KW-0432">Leucine biosynthesis</keyword>
<keyword id="KW-0456">Lyase</keyword>
<keyword id="KW-0479">Metal-binding</keyword>
<evidence type="ECO:0000255" key="1">
    <source>
        <dbReference type="HAMAP-Rule" id="MF_01026"/>
    </source>
</evidence>
<proteinExistence type="inferred from homology"/>
<organism>
    <name type="scientific">Flavobacterium johnsoniae (strain ATCC 17061 / DSM 2064 / JCM 8514 / BCRC 14874 / CCUG 350202 / NBRC 14942 / NCIMB 11054 / UW101)</name>
    <name type="common">Cytophaga johnsonae</name>
    <dbReference type="NCBI Taxonomy" id="376686"/>
    <lineage>
        <taxon>Bacteria</taxon>
        <taxon>Pseudomonadati</taxon>
        <taxon>Bacteroidota</taxon>
        <taxon>Flavobacteriia</taxon>
        <taxon>Flavobacteriales</taxon>
        <taxon>Flavobacteriaceae</taxon>
        <taxon>Flavobacterium</taxon>
    </lineage>
</organism>
<accession>A5FKC6</accession>
<gene>
    <name evidence="1" type="primary">leuC</name>
    <name type="ordered locus">Fjoh_1307</name>
</gene>